<proteinExistence type="evidence at protein level"/>
<feature type="chain" id="PRO_0000402075" description="Alpha-tubulin N-acetyltransferase 1">
    <location>
        <begin position="1"/>
        <end position="262"/>
    </location>
</feature>
<feature type="domain" description="N-acetyltransferase" evidence="1">
    <location>
        <begin position="1"/>
        <end position="177"/>
    </location>
</feature>
<feature type="binding site" evidence="1">
    <location>
        <begin position="111"/>
        <end position="124"/>
    </location>
    <ligand>
        <name>acetyl-CoA</name>
        <dbReference type="ChEBI" id="CHEBI:57288"/>
    </ligand>
</feature>
<feature type="mutagenesis site" description="In ky850; Causes axonal breaks in mechanosensory neurons." evidence="5">
    <location>
        <begin position="27"/>
        <end position="262"/>
    </location>
</feature>
<feature type="mutagenesis site" description="Rescues axonal degeneration and mitochondrial distribution defect phenotypes." evidence="5">
    <original>D</original>
    <variation>N</variation>
    <location>
        <position position="144"/>
    </location>
</feature>
<gene>
    <name evidence="1" type="primary">mec-17</name>
    <name type="ORF">F57H12.7</name>
</gene>
<name>ATAT1_CAEEL</name>
<dbReference type="EC" id="2.3.1.108" evidence="1"/>
<dbReference type="EMBL" id="FO081188">
    <property type="protein sequence ID" value="CCD69773.1"/>
    <property type="molecule type" value="Genomic_DNA"/>
</dbReference>
<dbReference type="PIR" id="T32979">
    <property type="entry name" value="T32979"/>
</dbReference>
<dbReference type="RefSeq" id="NP_501337.1">
    <property type="nucleotide sequence ID" value="NM_068936.5"/>
</dbReference>
<dbReference type="SMR" id="O45100"/>
<dbReference type="BioGRID" id="42710">
    <property type="interactions" value="3"/>
</dbReference>
<dbReference type="FunCoup" id="O45100">
    <property type="interactions" value="1"/>
</dbReference>
<dbReference type="STRING" id="6239.F57H12.7a.1"/>
<dbReference type="PaxDb" id="6239-F57H12.7"/>
<dbReference type="PeptideAtlas" id="O45100"/>
<dbReference type="EnsemblMetazoa" id="F57H12.7a.1">
    <property type="protein sequence ID" value="F57H12.7a.1"/>
    <property type="gene ID" value="WBGene00003178"/>
</dbReference>
<dbReference type="GeneID" id="177596"/>
<dbReference type="KEGG" id="cel:CELE_F57H12.7"/>
<dbReference type="UCSC" id="F57H12.7">
    <property type="organism name" value="c. elegans"/>
</dbReference>
<dbReference type="AGR" id="WB:WBGene00003178"/>
<dbReference type="CTD" id="177596"/>
<dbReference type="WormBase" id="F57H12.7a">
    <property type="protein sequence ID" value="CE17128"/>
    <property type="gene ID" value="WBGene00003178"/>
    <property type="gene designation" value="mec-17"/>
</dbReference>
<dbReference type="eggNOG" id="KOG4601">
    <property type="taxonomic scope" value="Eukaryota"/>
</dbReference>
<dbReference type="HOGENOM" id="CLU_025013_1_0_1"/>
<dbReference type="InParanoid" id="O45100"/>
<dbReference type="OMA" id="DYMFSQE"/>
<dbReference type="OrthoDB" id="447510at2759"/>
<dbReference type="PhylomeDB" id="O45100"/>
<dbReference type="PRO" id="PR:O45100"/>
<dbReference type="Proteomes" id="UP000001940">
    <property type="component" value="Chromosome IV"/>
</dbReference>
<dbReference type="Bgee" id="WBGene00003178">
    <property type="expression patterns" value="Expressed in larva and 3 other cell types or tissues"/>
</dbReference>
<dbReference type="ExpressionAtlas" id="O45100">
    <property type="expression patterns" value="baseline and differential"/>
</dbReference>
<dbReference type="GO" id="GO:0005874">
    <property type="term" value="C:microtubule"/>
    <property type="evidence" value="ECO:0007669"/>
    <property type="project" value="InterPro"/>
</dbReference>
<dbReference type="GO" id="GO:0004468">
    <property type="term" value="F:L-lysine N-acetyltransferase activity, acting on acetyl phosphate as donor"/>
    <property type="evidence" value="ECO:0000250"/>
    <property type="project" value="WormBase"/>
</dbReference>
<dbReference type="GO" id="GO:0019799">
    <property type="term" value="F:tubulin N-acetyltransferase activity"/>
    <property type="evidence" value="ECO:0000315"/>
    <property type="project" value="UniProtKB"/>
</dbReference>
<dbReference type="GO" id="GO:0042490">
    <property type="term" value="P:mechanoreceptor differentiation"/>
    <property type="evidence" value="ECO:0000315"/>
    <property type="project" value="WormBase"/>
</dbReference>
<dbReference type="GO" id="GO:0000226">
    <property type="term" value="P:microtubule cytoskeleton organization"/>
    <property type="evidence" value="ECO:0000318"/>
    <property type="project" value="GO_Central"/>
</dbReference>
<dbReference type="GO" id="GO:0048666">
    <property type="term" value="P:neuron development"/>
    <property type="evidence" value="ECO:0007669"/>
    <property type="project" value="UniProtKB-UniRule"/>
</dbReference>
<dbReference type="GO" id="GO:0070507">
    <property type="term" value="P:regulation of microtubule cytoskeleton organization"/>
    <property type="evidence" value="ECO:0007669"/>
    <property type="project" value="UniProtKB-UniRule"/>
</dbReference>
<dbReference type="GO" id="GO:0001966">
    <property type="term" value="P:thigmotaxis"/>
    <property type="evidence" value="ECO:0000315"/>
    <property type="project" value="WormBase"/>
</dbReference>
<dbReference type="FunFam" id="3.40.630.30:FF:000142">
    <property type="entry name" value="Alpha-tubulin N-acetyltransferase 1"/>
    <property type="match status" value="1"/>
</dbReference>
<dbReference type="Gene3D" id="3.40.630.30">
    <property type="match status" value="1"/>
</dbReference>
<dbReference type="HAMAP" id="MF_03130">
    <property type="entry name" value="mec17"/>
    <property type="match status" value="1"/>
</dbReference>
<dbReference type="InterPro" id="IPR038746">
    <property type="entry name" value="Atat"/>
</dbReference>
<dbReference type="InterPro" id="IPR007965">
    <property type="entry name" value="GNAT_ATAT"/>
</dbReference>
<dbReference type="PANTHER" id="PTHR12327">
    <property type="entry name" value="ALPHA-TUBULIN N-ACETYLTRANSFERASE 1"/>
    <property type="match status" value="1"/>
</dbReference>
<dbReference type="PANTHER" id="PTHR12327:SF0">
    <property type="entry name" value="ALPHA-TUBULIN N-ACETYLTRANSFERASE 1"/>
    <property type="match status" value="1"/>
</dbReference>
<dbReference type="Pfam" id="PF05301">
    <property type="entry name" value="Acetyltransf_16"/>
    <property type="match status" value="1"/>
</dbReference>
<dbReference type="PROSITE" id="PS51730">
    <property type="entry name" value="GNAT_ATAT"/>
    <property type="match status" value="1"/>
</dbReference>
<sequence>MQVDADLRPILGPQLVRLDPMRVKQLQDPIVYEAIDNLAKLSAHCLQLRTPLTTCEKLINSDSTLYLSWKYDEEEKVSRLMGFAKVGRKKLFLYDSQMQTYEGEILCLLDFYVHFSCQRQGVGQQILDYMFSQEHTEPYQLALDNPSVTLLGFMSQKYGLIKPVWQNTNFVVFEELFLALSAENGIEKPPPDGWRRPMTPRRLGTGMTDTRWLQHAVSGHQSKGNAMAAPVDADMTPQGALSNRAHQAKARKAHILSSKPLW</sequence>
<evidence type="ECO:0000255" key="1">
    <source>
        <dbReference type="HAMAP-Rule" id="MF_03130"/>
    </source>
</evidence>
<evidence type="ECO:0000269" key="2">
    <source>
    </source>
</evidence>
<evidence type="ECO:0000269" key="3">
    <source>
    </source>
</evidence>
<evidence type="ECO:0000269" key="4">
    <source>
    </source>
</evidence>
<evidence type="ECO:0000269" key="5">
    <source>
    </source>
</evidence>
<evidence type="ECO:0000269" key="6">
    <source>
    </source>
</evidence>
<protein>
    <recommendedName>
        <fullName evidence="1">Alpha-tubulin N-acetyltransferase 1</fullName>
        <shortName evidence="1">Alpha-TAT 1</shortName>
        <shortName evidence="1">TAT 1</shortName>
        <ecNumber evidence="1">2.3.1.108</ecNumber>
    </recommendedName>
    <alternativeName>
        <fullName>Mechanosensory abnormality protein 17</fullName>
    </alternativeName>
</protein>
<organism>
    <name type="scientific">Caenorhabditis elegans</name>
    <dbReference type="NCBI Taxonomy" id="6239"/>
    <lineage>
        <taxon>Eukaryota</taxon>
        <taxon>Metazoa</taxon>
        <taxon>Ecdysozoa</taxon>
        <taxon>Nematoda</taxon>
        <taxon>Chromadorea</taxon>
        <taxon>Rhabditida</taxon>
        <taxon>Rhabditina</taxon>
        <taxon>Rhabditomorpha</taxon>
        <taxon>Rhabditoidea</taxon>
        <taxon>Rhabditidae</taxon>
        <taxon>Peloderinae</taxon>
        <taxon>Caenorhabditis</taxon>
    </lineage>
</organism>
<reference key="1">
    <citation type="journal article" date="1998" name="Science">
        <title>Genome sequence of the nematode C. elegans: a platform for investigating biology.</title>
        <authorList>
            <consortium name="The C. elegans sequencing consortium"/>
        </authorList>
    </citation>
    <scope>NUCLEOTIDE SEQUENCE [LARGE SCALE GENOMIC DNA]</scope>
    <source>
        <strain>Bristol N2</strain>
    </source>
</reference>
<reference key="2">
    <citation type="journal article" date="1989" name="Science">
        <title>Genetic control of differentiation of the Caenorhabditis elegans touch receptor neurons.</title>
        <authorList>
            <person name="Chalfie M."/>
            <person name="Au M."/>
        </authorList>
    </citation>
    <scope>FUNCTION</scope>
</reference>
<reference key="3">
    <citation type="journal article" date="2002" name="Nature">
        <title>Identification of genes expressed in C. elegans touch receptor neurons.</title>
        <authorList>
            <person name="Zhang Y."/>
            <person name="Ma C."/>
            <person name="Delohery T."/>
            <person name="Nasipak B."/>
            <person name="Foat B.C."/>
            <person name="Bounoutas A."/>
            <person name="Bussemaker H.J."/>
            <person name="Kim S.K."/>
            <person name="Chalfie M."/>
        </authorList>
    </citation>
    <scope>FUNCTION</scope>
    <scope>TISSUE SPECIFICITY</scope>
    <scope>DEVELOPMENTAL STAGE</scope>
</reference>
<reference key="4">
    <citation type="journal article" date="2010" name="Nature">
        <title>MEC-17 is an alpha-tubulin acetyltransferase.</title>
        <authorList>
            <person name="Akella J.S."/>
            <person name="Wloga D."/>
            <person name="Kim J."/>
            <person name="Starostina N.G."/>
            <person name="Lyons-Abbott S."/>
            <person name="Morrissette N.S."/>
            <person name="Dougan S.T."/>
            <person name="Kipreos E.T."/>
            <person name="Gaertig J."/>
        </authorList>
    </citation>
    <scope>FUNCTION</scope>
</reference>
<reference key="5">
    <citation type="journal article" date="2010" name="Proc. Natl. Acad. Sci. U.S.A.">
        <title>The major alpha-tubulin K40 acetyltransferase alphaTAT1 promotes rapid ciliogenesis and efficient mechanosensation.</title>
        <authorList>
            <person name="Shida T."/>
            <person name="Cueva J.G."/>
            <person name="Xu Z."/>
            <person name="Goodman M.B."/>
            <person name="Nachury M.V."/>
        </authorList>
    </citation>
    <scope>TISSUE SPECIFICITY</scope>
    <scope>DISRUPTION PHENOTYPE</scope>
</reference>
<reference key="6">
    <citation type="journal article" date="2014" name="Cell Rep.">
        <title>Loss of MEC-17 leads to microtubule instability and axonal degeneration.</title>
        <authorList>
            <person name="Neumann B."/>
            <person name="Hilliard M.A."/>
        </authorList>
    </citation>
    <scope>FUNCTION</scope>
    <scope>MUTAGENESIS OF 27-GLN--TRP-262 AND ASP-144</scope>
</reference>
<keyword id="KW-0012">Acyltransferase</keyword>
<keyword id="KW-1185">Reference proteome</keyword>
<keyword id="KW-0808">Transferase</keyword>
<comment type="function">
    <text evidence="1 2 3 5 6">Specifically acetylates 'Lys-40' in alpha-tubulin/mec-12 on the lumenal side of microtubules. Promotes microtubule destabilization and accelerates microtubule dynamics; this activity may be independent of acetylation activity. Acetylates alpha-tubulin with a slow enzymatic rate, due to a catalytic site that is not optimized for acetyl transfer. Enters the microtubule through each end and diffuses quickly throughout the lumen of microtubules. Acetylates only long/old microtubules because of its slow acetylation rate since it does not have time to act on dynamically unstable microtubules before the enzyme is released. Required for the maintenance of touch receptor neurons and possibly other type of neurons involved in locomotion. Regulates the number and localization of mitochondria in mechanosensory neurons (PubMed:24373971). Plays a role in axonal transport (PubMed:24373971).</text>
</comment>
<comment type="catalytic activity">
    <reaction evidence="1">
        <text>L-lysyl-[alpha-tubulin] + acetyl-CoA = N(6)-acetyl-L-lysyl-[alpha-tubulin] + CoA + H(+)</text>
        <dbReference type="Rhea" id="RHEA:15277"/>
        <dbReference type="Rhea" id="RHEA-COMP:11278"/>
        <dbReference type="Rhea" id="RHEA-COMP:11279"/>
        <dbReference type="ChEBI" id="CHEBI:15378"/>
        <dbReference type="ChEBI" id="CHEBI:29969"/>
        <dbReference type="ChEBI" id="CHEBI:57287"/>
        <dbReference type="ChEBI" id="CHEBI:57288"/>
        <dbReference type="ChEBI" id="CHEBI:61930"/>
        <dbReference type="EC" id="2.3.1.108"/>
    </reaction>
</comment>
<comment type="tissue specificity">
    <text evidence="2 4">Expressed solely in touch receptor neurons.</text>
</comment>
<comment type="developmental stage">
    <text evidence="2">Expressed in touch receptors from late embryos to adults.</text>
</comment>
<comment type="disruption phenotype">
    <text evidence="4">Mutants are partially insensitive to body touch.</text>
</comment>
<comment type="similarity">
    <text evidence="1">Belongs to the acetyltransferase ATAT1 family.</text>
</comment>
<accession>O45100</accession>